<evidence type="ECO:0000250" key="1"/>
<evidence type="ECO:0000256" key="2">
    <source>
        <dbReference type="SAM" id="MobiDB-lite"/>
    </source>
</evidence>
<evidence type="ECO:0000305" key="3"/>
<comment type="function">
    <text evidence="1">Required for normal formation of eisosomes, large cytoplasmic protein assemblies that localize to specialized domains on plasma membrane and mark the site of endocytosis.</text>
</comment>
<comment type="subcellular location">
    <subcellularLocation>
        <location evidence="1">Cytoplasmic granule</location>
    </subcellularLocation>
    <subcellularLocation>
        <location evidence="1">Cell membrane</location>
        <topology evidence="1">Peripheral membrane protein</topology>
        <orientation evidence="1">Cytoplasmic side</orientation>
    </subcellularLocation>
    <text evidence="1">Localizes at the eisosomes.</text>
</comment>
<comment type="similarity">
    <text evidence="3">Belongs to the EIS1 family.</text>
</comment>
<accession>Q6FKB4</accession>
<protein>
    <recommendedName>
        <fullName>Eisosome protein 1</fullName>
    </recommendedName>
</protein>
<proteinExistence type="inferred from homology"/>
<feature type="chain" id="PRO_0000410799" description="Eisosome protein 1">
    <location>
        <begin position="1"/>
        <end position="885"/>
    </location>
</feature>
<feature type="region of interest" description="Disordered" evidence="2">
    <location>
        <begin position="1"/>
        <end position="39"/>
    </location>
</feature>
<feature type="region of interest" description="Disordered" evidence="2">
    <location>
        <begin position="695"/>
        <end position="885"/>
    </location>
</feature>
<feature type="compositionally biased region" description="Polar residues" evidence="2">
    <location>
        <begin position="13"/>
        <end position="23"/>
    </location>
</feature>
<feature type="compositionally biased region" description="Basic and acidic residues" evidence="2">
    <location>
        <begin position="701"/>
        <end position="725"/>
    </location>
</feature>
<feature type="compositionally biased region" description="Low complexity" evidence="2">
    <location>
        <begin position="726"/>
        <end position="757"/>
    </location>
</feature>
<feature type="compositionally biased region" description="Basic and acidic residues" evidence="2">
    <location>
        <begin position="779"/>
        <end position="801"/>
    </location>
</feature>
<feature type="compositionally biased region" description="Basic and acidic residues" evidence="2">
    <location>
        <begin position="873"/>
        <end position="885"/>
    </location>
</feature>
<dbReference type="EMBL" id="CR380958">
    <property type="protein sequence ID" value="CAG62304.1"/>
    <property type="molecule type" value="Genomic_DNA"/>
</dbReference>
<dbReference type="RefSeq" id="XP_449330.1">
    <property type="nucleotide sequence ID" value="XM_449330.1"/>
</dbReference>
<dbReference type="SMR" id="Q6FKB4"/>
<dbReference type="FunCoup" id="Q6FKB4">
    <property type="interactions" value="69"/>
</dbReference>
<dbReference type="STRING" id="284593.Q6FKB4"/>
<dbReference type="EnsemblFungi" id="CAGL0L12914g-T">
    <property type="protein sequence ID" value="CAGL0L12914g-T-p1"/>
    <property type="gene ID" value="CAGL0L12914g"/>
</dbReference>
<dbReference type="KEGG" id="cgr:2890580"/>
<dbReference type="CGD" id="CAL0135934">
    <property type="gene designation" value="CAGL0L12914g"/>
</dbReference>
<dbReference type="VEuPathDB" id="FungiDB:CAGL0L12914g"/>
<dbReference type="eggNOG" id="ENOG502S8WV">
    <property type="taxonomic scope" value="Eukaryota"/>
</dbReference>
<dbReference type="HOGENOM" id="CLU_013228_0_0_1"/>
<dbReference type="InParanoid" id="Q6FKB4"/>
<dbReference type="OMA" id="EHTFSGF"/>
<dbReference type="Proteomes" id="UP000002428">
    <property type="component" value="Chromosome L"/>
</dbReference>
<dbReference type="GO" id="GO:0032126">
    <property type="term" value="C:eisosome"/>
    <property type="evidence" value="ECO:0007669"/>
    <property type="project" value="EnsemblFungi"/>
</dbReference>
<dbReference type="GO" id="GO:0005886">
    <property type="term" value="C:plasma membrane"/>
    <property type="evidence" value="ECO:0007669"/>
    <property type="project" value="UniProtKB-SubCell"/>
</dbReference>
<dbReference type="GO" id="GO:0070941">
    <property type="term" value="P:eisosome assembly"/>
    <property type="evidence" value="ECO:0007669"/>
    <property type="project" value="EnsemblFungi"/>
</dbReference>
<dbReference type="InterPro" id="IPR024527">
    <property type="entry name" value="Eisosome1"/>
</dbReference>
<dbReference type="PANTHER" id="PTHR28298">
    <property type="entry name" value="EISOSOME PROTEIN 1"/>
    <property type="match status" value="1"/>
</dbReference>
<dbReference type="PANTHER" id="PTHR28298:SF1">
    <property type="entry name" value="EISOSOME PROTEIN 1"/>
    <property type="match status" value="1"/>
</dbReference>
<dbReference type="Pfam" id="PF12757">
    <property type="entry name" value="Eisosome1"/>
    <property type="match status" value="1"/>
</dbReference>
<reference key="1">
    <citation type="journal article" date="2004" name="Nature">
        <title>Genome evolution in yeasts.</title>
        <authorList>
            <person name="Dujon B."/>
            <person name="Sherman D."/>
            <person name="Fischer G."/>
            <person name="Durrens P."/>
            <person name="Casaregola S."/>
            <person name="Lafontaine I."/>
            <person name="de Montigny J."/>
            <person name="Marck C."/>
            <person name="Neuveglise C."/>
            <person name="Talla E."/>
            <person name="Goffard N."/>
            <person name="Frangeul L."/>
            <person name="Aigle M."/>
            <person name="Anthouard V."/>
            <person name="Babour A."/>
            <person name="Barbe V."/>
            <person name="Barnay S."/>
            <person name="Blanchin S."/>
            <person name="Beckerich J.-M."/>
            <person name="Beyne E."/>
            <person name="Bleykasten C."/>
            <person name="Boisrame A."/>
            <person name="Boyer J."/>
            <person name="Cattolico L."/>
            <person name="Confanioleri F."/>
            <person name="de Daruvar A."/>
            <person name="Despons L."/>
            <person name="Fabre E."/>
            <person name="Fairhead C."/>
            <person name="Ferry-Dumazet H."/>
            <person name="Groppi A."/>
            <person name="Hantraye F."/>
            <person name="Hennequin C."/>
            <person name="Jauniaux N."/>
            <person name="Joyet P."/>
            <person name="Kachouri R."/>
            <person name="Kerrest A."/>
            <person name="Koszul R."/>
            <person name="Lemaire M."/>
            <person name="Lesur I."/>
            <person name="Ma L."/>
            <person name="Muller H."/>
            <person name="Nicaud J.-M."/>
            <person name="Nikolski M."/>
            <person name="Oztas S."/>
            <person name="Ozier-Kalogeropoulos O."/>
            <person name="Pellenz S."/>
            <person name="Potier S."/>
            <person name="Richard G.-F."/>
            <person name="Straub M.-L."/>
            <person name="Suleau A."/>
            <person name="Swennen D."/>
            <person name="Tekaia F."/>
            <person name="Wesolowski-Louvel M."/>
            <person name="Westhof E."/>
            <person name="Wirth B."/>
            <person name="Zeniou-Meyer M."/>
            <person name="Zivanovic Y."/>
            <person name="Bolotin-Fukuhara M."/>
            <person name="Thierry A."/>
            <person name="Bouchier C."/>
            <person name="Caudron B."/>
            <person name="Scarpelli C."/>
            <person name="Gaillardin C."/>
            <person name="Weissenbach J."/>
            <person name="Wincker P."/>
            <person name="Souciet J.-L."/>
        </authorList>
    </citation>
    <scope>NUCLEOTIDE SEQUENCE [LARGE SCALE GENOMIC DNA]</scope>
    <source>
        <strain>ATCC 2001 / BCRC 20586 / JCM 3761 / NBRC 0622 / NRRL Y-65 / CBS 138</strain>
    </source>
</reference>
<organism>
    <name type="scientific">Candida glabrata (strain ATCC 2001 / BCRC 20586 / JCM 3761 / NBRC 0622 / NRRL Y-65 / CBS 138)</name>
    <name type="common">Yeast</name>
    <name type="synonym">Nakaseomyces glabratus</name>
    <dbReference type="NCBI Taxonomy" id="284593"/>
    <lineage>
        <taxon>Eukaryota</taxon>
        <taxon>Fungi</taxon>
        <taxon>Dikarya</taxon>
        <taxon>Ascomycota</taxon>
        <taxon>Saccharomycotina</taxon>
        <taxon>Saccharomycetes</taxon>
        <taxon>Saccharomycetales</taxon>
        <taxon>Saccharomycetaceae</taxon>
        <taxon>Nakaseomyces</taxon>
    </lineage>
</organism>
<gene>
    <name type="primary">EIS1</name>
    <name type="ordered locus">CAGL0L12914g</name>
</gene>
<name>EIS1_CANGA</name>
<keyword id="KW-1003">Cell membrane</keyword>
<keyword id="KW-0472">Membrane</keyword>
<keyword id="KW-1185">Reference proteome</keyword>
<sequence>MSLISTVDDHTQDTASVASGSSATKKKYNPKVYHDDNQPLSKEAMYRAKLKYGVYNSPISGGVGVGVTDYKAATNKAANVANDNQTTVEAYRRLYVDQGAASAALKVGTEPVREKPDVHAEKFKQNRALNLNYTSAAAKALSVGTEKLFTASEEARHAGQKTYSIVSQVSAASTSRAMDMSKVLKGAERKAESRLKERSEPERKEYVKSYSMTAGAAADYGAAGGAAGAAGAAGAASRSIDLNSDVMARVAKRSELPPKQEGPTEKERNAAKFALGAATAVKDLDPKSMLPEDFAAREQQRQEFVRHMTSQKVLSMAREKVDREMASIDKQQAERRLYDNDSYNRAAVAIAQQNYQNKLNAQSEKAGKINIGGGLFLTPQEVDNIAHGLISPVLGEVSERAEAQRAADTEIATRIATYEKDLSNWKNLQRTKQTNDKNVLEVNSKRIALEKQEAKDAAQKKYDEMIKKMDETVAEKKKQLEAAKQRLEDLQEEMNMKLGMQDQKVEEELQKWDENREKDIEAARLEQEELVKPFQDELDEAEKQHEEFLKERDGIDTEITGLQEAIEGHKKKIEIYEGDIRAHDNMHVEEGGKLENLGQNKETLANTLNNDIIILANKTKEQAELSTKQARLKQLEVDAMVNERKSELNQTEIQLKKEKLQLLESMRNKAQARGDEKIDEEKVKGLFGMTSEEYLAKHAPKKEEPAEEKLETVAEEASAMKKEKPTAAAATTAAAAAATTPKKPASAPRAAPAAASPKSEKKRKGSVFDKFFLGPRKAHMIEETRTNQKVAEEKAKMDSVSKPHLVSTTNEHAKPHAAATEEAPKKVDAPKPATEVKSSEAAEDEENKLEHTFSGFSQGSVADDKGTTSGAHSETKKDGYFKEVF</sequence>